<name>Y1972_ARATH</name>
<proteinExistence type="evidence at transcript level"/>
<keyword id="KW-0025">Alternative splicing</keyword>
<keyword id="KW-0067">ATP-binding</keyword>
<keyword id="KW-1003">Cell membrane</keyword>
<keyword id="KW-0325">Glycoprotein</keyword>
<keyword id="KW-0418">Kinase</keyword>
<keyword id="KW-0433">Leucine-rich repeat</keyword>
<keyword id="KW-0472">Membrane</keyword>
<keyword id="KW-0547">Nucleotide-binding</keyword>
<keyword id="KW-0597">Phosphoprotein</keyword>
<keyword id="KW-0675">Receptor</keyword>
<keyword id="KW-1185">Reference proteome</keyword>
<keyword id="KW-0677">Repeat</keyword>
<keyword id="KW-0723">Serine/threonine-protein kinase</keyword>
<keyword id="KW-0732">Signal</keyword>
<keyword id="KW-0808">Transferase</keyword>
<keyword id="KW-0812">Transmembrane</keyword>
<keyword id="KW-1133">Transmembrane helix</keyword>
<comment type="catalytic activity">
    <reaction>
        <text>L-seryl-[protein] + ATP = O-phospho-L-seryl-[protein] + ADP + H(+)</text>
        <dbReference type="Rhea" id="RHEA:17989"/>
        <dbReference type="Rhea" id="RHEA-COMP:9863"/>
        <dbReference type="Rhea" id="RHEA-COMP:11604"/>
        <dbReference type="ChEBI" id="CHEBI:15378"/>
        <dbReference type="ChEBI" id="CHEBI:29999"/>
        <dbReference type="ChEBI" id="CHEBI:30616"/>
        <dbReference type="ChEBI" id="CHEBI:83421"/>
        <dbReference type="ChEBI" id="CHEBI:456216"/>
        <dbReference type="EC" id="2.7.11.1"/>
    </reaction>
</comment>
<comment type="catalytic activity">
    <reaction>
        <text>L-threonyl-[protein] + ATP = O-phospho-L-threonyl-[protein] + ADP + H(+)</text>
        <dbReference type="Rhea" id="RHEA:46608"/>
        <dbReference type="Rhea" id="RHEA-COMP:11060"/>
        <dbReference type="Rhea" id="RHEA-COMP:11605"/>
        <dbReference type="ChEBI" id="CHEBI:15378"/>
        <dbReference type="ChEBI" id="CHEBI:30013"/>
        <dbReference type="ChEBI" id="CHEBI:30616"/>
        <dbReference type="ChEBI" id="CHEBI:61977"/>
        <dbReference type="ChEBI" id="CHEBI:456216"/>
        <dbReference type="EC" id="2.7.11.1"/>
    </reaction>
</comment>
<comment type="subcellular location">
    <subcellularLocation>
        <location evidence="6">Cell membrane</location>
        <topology evidence="6">Single-pass type I membrane protein</topology>
    </subcellularLocation>
</comment>
<comment type="alternative products">
    <event type="alternative splicing"/>
    <isoform>
        <id>Q9ASQ6-1</id>
        <name>1</name>
        <sequence type="displayed"/>
    </isoform>
    <isoform>
        <id>Q9ASQ6-3</id>
        <name>2</name>
        <sequence type="described" ref="VSP_040679 VSP_040680"/>
    </isoform>
</comment>
<comment type="miscellaneous">
    <molecule>Isoform 2</molecule>
    <text evidence="6">May be due to an intron retention.</text>
</comment>
<comment type="similarity">
    <text evidence="3">Belongs to the protein kinase superfamily. Ser/Thr protein kinase family.</text>
</comment>
<comment type="sequence caution" evidence="6">
    <conflict type="erroneous gene model prediction">
        <sequence resource="EMBL-CDS" id="AAG10622"/>
    </conflict>
</comment>
<comment type="sequence caution" evidence="6">
    <conflict type="erroneous gene model prediction">
        <sequence resource="EMBL-CDS" id="AAG50772"/>
    </conflict>
</comment>
<comment type="sequence caution" evidence="6">
    <conflict type="erroneous initiation">
        <sequence resource="EMBL-CDS" id="AAK32925"/>
    </conflict>
    <text>Truncated N-terminus.</text>
</comment>
<sequence>MSIILWSFFLFFTIILSSLTNITTLASFSSLHADELNALKEIATTLGIKRLNLRDEDPCSSKTLKIIQEVDFVPNLDINNTIGCDCSFNNNTICRITELALKTMSLRGKLPPELTKLPYLKSIELCRNYLSGTIPMEWAKMAYLTSISVCANNLSGNLPAGLQNFKNLTFLGVEGNQFSGPIPDELGNLTSLTGLELASNKFTGILPGTLARLVNLERVRICDNNFTGIIPAYIGNWTRLQKLHLYASGLTGPIPDAVVRLENLLELSLSDTTGIKSFPNLSSKGLKRLILRNVGLSGPIPSYIWNLTDLKILDLSFNKLNGIVQGVQNPPKNIYLTGNLLSGNIESGGLLNSQSYIDLSYNNFSWSSSCQKGSTINTYQSSYSKNNLTGLPPCAVPANCKKYQRFLHINCGGEEVSIRNSLGKITYQTDNSRQTNAASNQQFDYWGVSNTGDFTDDNSDHDEYYTSTNLTLSGDYPDLYKTARRSALSLVYYAFCLENGNYNVKLHFMEIQFSDKEVYSRLGRRIFDVYVQGKLFLRDFNINKEANGNMKPVIKEINATVTNHMLEIRLYWAGKGTTLIPKRGNYGPLISAISLCHSQEPLCGVEKTKHHIKYPLILGASGALVTIVLLAVGIYARGIYRRDNNRRERDLRAQGLQTVCFSWRQLQTATNNFDQANKLGEGGFGSVFKGELSDGTIIAVKQLSSKSSQGNREFVNEIGMISGLNHPNLVKLYGCCVERDQLLLVYEYMENNSLALALFGQNSLKLDWAARQKICVGIARGLEFLHDGSAMRMVHRDIKTTNVLLDTDLNAKISDFGLARLHEAEHTHISTKVAGTIGYMAPEYALWGQLTEKADVYSFGVVAMEIVSGKSNTKQQGNADSVSLINWALTLQQTGDILEIVDRMLEGEFNRSEAVRMIKVALVCTNSSPSLRPTMSEAVKMLEGEIEITQVMSDPGIYGHDWSISKLRDIDTHSSSSTSGVTDQTTTTMKSSVSGCDLYPLYPESMILNSTVENSSSSL</sequence>
<reference key="1">
    <citation type="journal article" date="2000" name="Nature">
        <title>Sequence and analysis of chromosome 1 of the plant Arabidopsis thaliana.</title>
        <authorList>
            <person name="Theologis A."/>
            <person name="Ecker J.R."/>
            <person name="Palm C.J."/>
            <person name="Federspiel N.A."/>
            <person name="Kaul S."/>
            <person name="White O."/>
            <person name="Alonso J."/>
            <person name="Altafi H."/>
            <person name="Araujo R."/>
            <person name="Bowman C.L."/>
            <person name="Brooks S.Y."/>
            <person name="Buehler E."/>
            <person name="Chan A."/>
            <person name="Chao Q."/>
            <person name="Chen H."/>
            <person name="Cheuk R.F."/>
            <person name="Chin C.W."/>
            <person name="Chung M.K."/>
            <person name="Conn L."/>
            <person name="Conway A.B."/>
            <person name="Conway A.R."/>
            <person name="Creasy T.H."/>
            <person name="Dewar K."/>
            <person name="Dunn P."/>
            <person name="Etgu P."/>
            <person name="Feldblyum T.V."/>
            <person name="Feng J.-D."/>
            <person name="Fong B."/>
            <person name="Fujii C.Y."/>
            <person name="Gill J.E."/>
            <person name="Goldsmith A.D."/>
            <person name="Haas B."/>
            <person name="Hansen N.F."/>
            <person name="Hughes B."/>
            <person name="Huizar L."/>
            <person name="Hunter J.L."/>
            <person name="Jenkins J."/>
            <person name="Johnson-Hopson C."/>
            <person name="Khan S."/>
            <person name="Khaykin E."/>
            <person name="Kim C.J."/>
            <person name="Koo H.L."/>
            <person name="Kremenetskaia I."/>
            <person name="Kurtz D.B."/>
            <person name="Kwan A."/>
            <person name="Lam B."/>
            <person name="Langin-Hooper S."/>
            <person name="Lee A."/>
            <person name="Lee J.M."/>
            <person name="Lenz C.A."/>
            <person name="Li J.H."/>
            <person name="Li Y.-P."/>
            <person name="Lin X."/>
            <person name="Liu S.X."/>
            <person name="Liu Z.A."/>
            <person name="Luros J.S."/>
            <person name="Maiti R."/>
            <person name="Marziali A."/>
            <person name="Militscher J."/>
            <person name="Miranda M."/>
            <person name="Nguyen M."/>
            <person name="Nierman W.C."/>
            <person name="Osborne B.I."/>
            <person name="Pai G."/>
            <person name="Peterson J."/>
            <person name="Pham P.K."/>
            <person name="Rizzo M."/>
            <person name="Rooney T."/>
            <person name="Rowley D."/>
            <person name="Sakano H."/>
            <person name="Salzberg S.L."/>
            <person name="Schwartz J.R."/>
            <person name="Shinn P."/>
            <person name="Southwick A.M."/>
            <person name="Sun H."/>
            <person name="Tallon L.J."/>
            <person name="Tambunga G."/>
            <person name="Toriumi M.J."/>
            <person name="Town C.D."/>
            <person name="Utterback T."/>
            <person name="Van Aken S."/>
            <person name="Vaysberg M."/>
            <person name="Vysotskaia V.S."/>
            <person name="Walker M."/>
            <person name="Wu D."/>
            <person name="Yu G."/>
            <person name="Fraser C.M."/>
            <person name="Venter J.C."/>
            <person name="Davis R.W."/>
        </authorList>
    </citation>
    <scope>NUCLEOTIDE SEQUENCE [LARGE SCALE GENOMIC DNA]</scope>
    <source>
        <strain>cv. Columbia</strain>
    </source>
</reference>
<reference key="2">
    <citation type="journal article" date="2017" name="Plant J.">
        <title>Araport11: a complete reannotation of the Arabidopsis thaliana reference genome.</title>
        <authorList>
            <person name="Cheng C.Y."/>
            <person name="Krishnakumar V."/>
            <person name="Chan A.P."/>
            <person name="Thibaud-Nissen F."/>
            <person name="Schobel S."/>
            <person name="Town C.D."/>
        </authorList>
    </citation>
    <scope>GENOME REANNOTATION</scope>
    <source>
        <strain>cv. Columbia</strain>
    </source>
</reference>
<reference key="3">
    <citation type="journal article" date="2003" name="Science">
        <title>Empirical analysis of transcriptional activity in the Arabidopsis genome.</title>
        <authorList>
            <person name="Yamada K."/>
            <person name="Lim J."/>
            <person name="Dale J.M."/>
            <person name="Chen H."/>
            <person name="Shinn P."/>
            <person name="Palm C.J."/>
            <person name="Southwick A.M."/>
            <person name="Wu H.C."/>
            <person name="Kim C.J."/>
            <person name="Nguyen M."/>
            <person name="Pham P.K."/>
            <person name="Cheuk R.F."/>
            <person name="Karlin-Newmann G."/>
            <person name="Liu S.X."/>
            <person name="Lam B."/>
            <person name="Sakano H."/>
            <person name="Wu T."/>
            <person name="Yu G."/>
            <person name="Miranda M."/>
            <person name="Quach H.L."/>
            <person name="Tripp M."/>
            <person name="Chang C.H."/>
            <person name="Lee J.M."/>
            <person name="Toriumi M.J."/>
            <person name="Chan M.M."/>
            <person name="Tang C.C."/>
            <person name="Onodera C.S."/>
            <person name="Deng J.M."/>
            <person name="Akiyama K."/>
            <person name="Ansari Y."/>
            <person name="Arakawa T."/>
            <person name="Banh J."/>
            <person name="Banno F."/>
            <person name="Bowser L."/>
            <person name="Brooks S.Y."/>
            <person name="Carninci P."/>
            <person name="Chao Q."/>
            <person name="Choy N."/>
            <person name="Enju A."/>
            <person name="Goldsmith A.D."/>
            <person name="Gurjal M."/>
            <person name="Hansen N.F."/>
            <person name="Hayashizaki Y."/>
            <person name="Johnson-Hopson C."/>
            <person name="Hsuan V.W."/>
            <person name="Iida K."/>
            <person name="Karnes M."/>
            <person name="Khan S."/>
            <person name="Koesema E."/>
            <person name="Ishida J."/>
            <person name="Jiang P.X."/>
            <person name="Jones T."/>
            <person name="Kawai J."/>
            <person name="Kamiya A."/>
            <person name="Meyers C."/>
            <person name="Nakajima M."/>
            <person name="Narusaka M."/>
            <person name="Seki M."/>
            <person name="Sakurai T."/>
            <person name="Satou M."/>
            <person name="Tamse R."/>
            <person name="Vaysberg M."/>
            <person name="Wallender E.K."/>
            <person name="Wong C."/>
            <person name="Yamamura Y."/>
            <person name="Yuan S."/>
            <person name="Shinozaki K."/>
            <person name="Davis R.W."/>
            <person name="Theologis A."/>
            <person name="Ecker J.R."/>
        </authorList>
    </citation>
    <scope>NUCLEOTIDE SEQUENCE [LARGE SCALE MRNA] (ISOFORM 2)</scope>
    <scope>NUCLEOTIDE SEQUENCE [LARGE SCALE MRNA] OF 720-1019 (ISOFORM 1)</scope>
    <source>
        <strain>cv. Columbia</strain>
    </source>
</reference>
<reference key="4">
    <citation type="journal article" date="2010" name="BMC Genomics">
        <title>Genome-wide cloning and sequence analysis of leucine-rich repeat receptor-like protein kinase genes in Arabidopsis thaliana.</title>
        <authorList>
            <person name="Gou X."/>
            <person name="He K."/>
            <person name="Yang H."/>
            <person name="Yuan T."/>
            <person name="Lin H."/>
            <person name="Clouse S.D."/>
            <person name="Li J."/>
        </authorList>
    </citation>
    <scope>NUCLEOTIDE SEQUENCE [LARGE SCALE MRNA] OF 720-1019 (ISOFORM 1)</scope>
    <source>
        <strain>cv. Columbia</strain>
    </source>
</reference>
<feature type="signal peptide" evidence="2">
    <location>
        <begin position="1"/>
        <end position="19"/>
    </location>
</feature>
<feature type="chain" id="PRO_0000403343" description="Probable LRR receptor-like serine/threonine-protein kinase At1g29720">
    <location>
        <begin position="20"/>
        <end position="1019"/>
    </location>
</feature>
<feature type="topological domain" description="Extracellular" evidence="2">
    <location>
        <begin position="20"/>
        <end position="615"/>
    </location>
</feature>
<feature type="transmembrane region" description="Helical" evidence="2">
    <location>
        <begin position="616"/>
        <end position="636"/>
    </location>
</feature>
<feature type="topological domain" description="Cytoplasmic" evidence="2">
    <location>
        <begin position="637"/>
        <end position="1019"/>
    </location>
</feature>
<feature type="repeat" description="LRR 1">
    <location>
        <begin position="93"/>
        <end position="117"/>
    </location>
</feature>
<feature type="repeat" description="LRR 2">
    <location>
        <begin position="118"/>
        <end position="141"/>
    </location>
</feature>
<feature type="repeat" description="LRR 3">
    <location>
        <begin position="143"/>
        <end position="165"/>
    </location>
</feature>
<feature type="repeat" description="LRR 4">
    <location>
        <begin position="166"/>
        <end position="189"/>
    </location>
</feature>
<feature type="repeat" description="LRR 5">
    <location>
        <begin position="190"/>
        <end position="212"/>
    </location>
</feature>
<feature type="repeat" description="LRR 6">
    <location>
        <begin position="214"/>
        <end position="236"/>
    </location>
</feature>
<feature type="repeat" description="LRR 7">
    <location>
        <begin position="237"/>
        <end position="261"/>
    </location>
</feature>
<feature type="repeat" description="LRR 8">
    <location>
        <begin position="263"/>
        <end position="283"/>
    </location>
</feature>
<feature type="repeat" description="LRR 9">
    <location>
        <begin position="284"/>
        <end position="307"/>
    </location>
</feature>
<feature type="repeat" description="LRR 10">
    <location>
        <begin position="308"/>
        <end position="330"/>
    </location>
</feature>
<feature type="repeat" description="LRR 11">
    <location>
        <begin position="332"/>
        <end position="351"/>
    </location>
</feature>
<feature type="repeat" description="LRR 12">
    <location>
        <begin position="352"/>
        <end position="374"/>
    </location>
</feature>
<feature type="repeat" description="LRR 13">
    <location>
        <begin position="375"/>
        <end position="398"/>
    </location>
</feature>
<feature type="domain" description="Protein kinase" evidence="3">
    <location>
        <begin position="673"/>
        <end position="946"/>
    </location>
</feature>
<feature type="active site" description="Proton acceptor" evidence="3 4">
    <location>
        <position position="797"/>
    </location>
</feature>
<feature type="binding site" evidence="3">
    <location>
        <begin position="679"/>
        <end position="687"/>
    </location>
    <ligand>
        <name>ATP</name>
        <dbReference type="ChEBI" id="CHEBI:30616"/>
    </ligand>
</feature>
<feature type="binding site" evidence="3">
    <location>
        <position position="701"/>
    </location>
    <ligand>
        <name>ATP</name>
        <dbReference type="ChEBI" id="CHEBI:30616"/>
    </ligand>
</feature>
<feature type="modified residue" description="Phosphotyrosine" evidence="1">
    <location>
        <position position="746"/>
    </location>
</feature>
<feature type="modified residue" description="Phosphoserine" evidence="1">
    <location>
        <position position="830"/>
    </location>
</feature>
<feature type="modified residue" description="Phosphothreonine" evidence="1">
    <location>
        <position position="831"/>
    </location>
</feature>
<feature type="modified residue" description="Phosphothreonine" evidence="1">
    <location>
        <position position="836"/>
    </location>
</feature>
<feature type="modified residue" description="Phosphotyrosine" evidence="1">
    <location>
        <position position="844"/>
    </location>
</feature>
<feature type="glycosylation site" description="N-linked (GlcNAc...) asparagine" evidence="2">
    <location>
        <position position="21"/>
    </location>
</feature>
<feature type="glycosylation site" description="N-linked (GlcNAc...) asparagine" evidence="2">
    <location>
        <position position="79"/>
    </location>
</feature>
<feature type="glycosylation site" description="N-linked (GlcNAc...) asparagine" evidence="2">
    <location>
        <position position="90"/>
    </location>
</feature>
<feature type="glycosylation site" description="N-linked (GlcNAc...) asparagine" evidence="2">
    <location>
        <position position="153"/>
    </location>
</feature>
<feature type="glycosylation site" description="N-linked (GlcNAc...) asparagine" evidence="2">
    <location>
        <position position="167"/>
    </location>
</feature>
<feature type="glycosylation site" description="N-linked (GlcNAc...) asparagine" evidence="2">
    <location>
        <position position="188"/>
    </location>
</feature>
<feature type="glycosylation site" description="N-linked (GlcNAc...) asparagine" evidence="2">
    <location>
        <position position="225"/>
    </location>
</feature>
<feature type="glycosylation site" description="N-linked (GlcNAc...) asparagine" evidence="2">
    <location>
        <position position="236"/>
    </location>
</feature>
<feature type="glycosylation site" description="N-linked (GlcNAc...) asparagine" evidence="2">
    <location>
        <position position="280"/>
    </location>
</feature>
<feature type="glycosylation site" description="N-linked (GlcNAc...) asparagine" evidence="2">
    <location>
        <position position="306"/>
    </location>
</feature>
<feature type="glycosylation site" description="N-linked (GlcNAc...) asparagine" evidence="2">
    <location>
        <position position="363"/>
    </location>
</feature>
<feature type="glycosylation site" description="N-linked (GlcNAc...) asparagine" evidence="2">
    <location>
        <position position="387"/>
    </location>
</feature>
<feature type="glycosylation site" description="N-linked (GlcNAc...) asparagine" evidence="2">
    <location>
        <position position="469"/>
    </location>
</feature>
<feature type="glycosylation site" description="N-linked (GlcNAc...) asparagine" evidence="2">
    <location>
        <position position="558"/>
    </location>
</feature>
<feature type="splice variant" id="VSP_040679" description="In isoform 2." evidence="5">
    <location>
        <begin position="1"/>
        <end position="591"/>
    </location>
</feature>
<feature type="splice variant" id="VSP_040680" description="In isoform 2." evidence="5">
    <original>AISLCHSQEPLCG</original>
    <variation>MYIYIFTFSVSFV</variation>
    <location>
        <begin position="592"/>
        <end position="604"/>
    </location>
</feature>
<organism>
    <name type="scientific">Arabidopsis thaliana</name>
    <name type="common">Mouse-ear cress</name>
    <dbReference type="NCBI Taxonomy" id="3702"/>
    <lineage>
        <taxon>Eukaryota</taxon>
        <taxon>Viridiplantae</taxon>
        <taxon>Streptophyta</taxon>
        <taxon>Embryophyta</taxon>
        <taxon>Tracheophyta</taxon>
        <taxon>Spermatophyta</taxon>
        <taxon>Magnoliopsida</taxon>
        <taxon>eudicotyledons</taxon>
        <taxon>Gunneridae</taxon>
        <taxon>Pentapetalae</taxon>
        <taxon>rosids</taxon>
        <taxon>malvids</taxon>
        <taxon>Brassicales</taxon>
        <taxon>Brassicaceae</taxon>
        <taxon>Camelineae</taxon>
        <taxon>Arabidopsis</taxon>
    </lineage>
</organism>
<evidence type="ECO:0000250" key="1">
    <source>
        <dbReference type="UniProtKB" id="O48814"/>
    </source>
</evidence>
<evidence type="ECO:0000255" key="2"/>
<evidence type="ECO:0000255" key="3">
    <source>
        <dbReference type="PROSITE-ProRule" id="PRU00159"/>
    </source>
</evidence>
<evidence type="ECO:0000255" key="4">
    <source>
        <dbReference type="PROSITE-ProRule" id="PRU10027"/>
    </source>
</evidence>
<evidence type="ECO:0000303" key="5">
    <source>
    </source>
</evidence>
<evidence type="ECO:0000305" key="6"/>
<accession>Q9ASQ6</accession>
<accession>Q9C6G3</accession>
<accession>Q9FXE9</accession>
<gene>
    <name type="primary">RFK1</name>
    <name type="ordered locus">At1g29720</name>
    <name type="ORF">F1N18.22</name>
    <name type="ORF">T3M22.6</name>
</gene>
<dbReference type="EC" id="2.7.11.1"/>
<dbReference type="EMBL" id="AC008030">
    <property type="protein sequence ID" value="AAG10622.1"/>
    <property type="status" value="ALT_SEQ"/>
    <property type="molecule type" value="Genomic_DNA"/>
</dbReference>
<dbReference type="EMBL" id="AC079288">
    <property type="protein sequence ID" value="AAG50772.1"/>
    <property type="status" value="ALT_SEQ"/>
    <property type="molecule type" value="Genomic_DNA"/>
</dbReference>
<dbReference type="EMBL" id="CP002684">
    <property type="protein sequence ID" value="AEE31121.1"/>
    <property type="molecule type" value="Genomic_DNA"/>
</dbReference>
<dbReference type="EMBL" id="AF367338">
    <property type="protein sequence ID" value="AAK32925.1"/>
    <property type="status" value="ALT_INIT"/>
    <property type="molecule type" value="mRNA"/>
</dbReference>
<dbReference type="EMBL" id="AY113170">
    <property type="protein sequence ID" value="AAM47473.1"/>
    <property type="molecule type" value="mRNA"/>
</dbReference>
<dbReference type="EMBL" id="FJ708640">
    <property type="protein sequence ID" value="ACN59236.1"/>
    <property type="molecule type" value="mRNA"/>
</dbReference>
<dbReference type="PIR" id="F86420">
    <property type="entry name" value="F86420"/>
</dbReference>
<dbReference type="RefSeq" id="NP_564335.3">
    <molecule id="Q9ASQ6-1"/>
    <property type="nucleotide sequence ID" value="NM_102712.4"/>
</dbReference>
<dbReference type="SMR" id="Q9ASQ6"/>
<dbReference type="BioGRID" id="25085">
    <property type="interactions" value="8"/>
</dbReference>
<dbReference type="FunCoup" id="Q9ASQ6">
    <property type="interactions" value="2"/>
</dbReference>
<dbReference type="IntAct" id="Q9ASQ6">
    <property type="interactions" value="8"/>
</dbReference>
<dbReference type="STRING" id="3702.Q9ASQ6"/>
<dbReference type="CAZy" id="CBM57">
    <property type="family name" value="Carbohydrate-Binding Module Family 57"/>
</dbReference>
<dbReference type="GlyCosmos" id="Q9ASQ6">
    <property type="glycosylation" value="14 sites, No reported glycans"/>
</dbReference>
<dbReference type="GlyGen" id="Q9ASQ6">
    <property type="glycosylation" value="14 sites"/>
</dbReference>
<dbReference type="PaxDb" id="3702-AT1G29720.1"/>
<dbReference type="ProteomicsDB" id="242424">
    <molecule id="Q9ASQ6-1"/>
</dbReference>
<dbReference type="EnsemblPlants" id="AT1G29720.1">
    <molecule id="Q9ASQ6-1"/>
    <property type="protein sequence ID" value="AT1G29720.1"/>
    <property type="gene ID" value="AT1G29720"/>
</dbReference>
<dbReference type="GeneID" id="839850"/>
<dbReference type="Gramene" id="AT1G29720.1">
    <molecule id="Q9ASQ6-1"/>
    <property type="protein sequence ID" value="AT1G29720.1"/>
    <property type="gene ID" value="AT1G29720"/>
</dbReference>
<dbReference type="KEGG" id="ath:AT1G29720"/>
<dbReference type="Araport" id="AT1G29720"/>
<dbReference type="TAIR" id="AT1G29720"/>
<dbReference type="eggNOG" id="KOG1187">
    <property type="taxonomic scope" value="Eukaryota"/>
</dbReference>
<dbReference type="HOGENOM" id="CLU_000288_114_2_1"/>
<dbReference type="InParanoid" id="Q9ASQ6"/>
<dbReference type="OMA" id="RSIHINC"/>
<dbReference type="PhylomeDB" id="Q9ASQ6"/>
<dbReference type="PRO" id="PR:Q9ASQ6"/>
<dbReference type="Proteomes" id="UP000006548">
    <property type="component" value="Chromosome 1"/>
</dbReference>
<dbReference type="ExpressionAtlas" id="Q9ASQ6">
    <property type="expression patterns" value="baseline and differential"/>
</dbReference>
<dbReference type="GO" id="GO:0005886">
    <property type="term" value="C:plasma membrane"/>
    <property type="evidence" value="ECO:0007669"/>
    <property type="project" value="UniProtKB-SubCell"/>
</dbReference>
<dbReference type="GO" id="GO:0005524">
    <property type="term" value="F:ATP binding"/>
    <property type="evidence" value="ECO:0007669"/>
    <property type="project" value="UniProtKB-KW"/>
</dbReference>
<dbReference type="GO" id="GO:0106310">
    <property type="term" value="F:protein serine kinase activity"/>
    <property type="evidence" value="ECO:0007669"/>
    <property type="project" value="RHEA"/>
</dbReference>
<dbReference type="GO" id="GO:0004674">
    <property type="term" value="F:protein serine/threonine kinase activity"/>
    <property type="evidence" value="ECO:0007669"/>
    <property type="project" value="UniProtKB-KW"/>
</dbReference>
<dbReference type="CDD" id="cd14066">
    <property type="entry name" value="STKc_IRAK"/>
    <property type="match status" value="1"/>
</dbReference>
<dbReference type="FunFam" id="3.80.10.10:FF:000383">
    <property type="entry name" value="Leucine-rich repeat receptor protein kinase EMS1"/>
    <property type="match status" value="1"/>
</dbReference>
<dbReference type="FunFam" id="1.10.510.10:FF:001106">
    <property type="entry name" value="Probable LRR receptor-like serine/threonine-protein kinase At1g29720"/>
    <property type="match status" value="1"/>
</dbReference>
<dbReference type="FunFam" id="3.80.10.10:FF:002838">
    <property type="entry name" value="Probable LRR receptor-like serine/threonine-protein kinase At1g29720"/>
    <property type="match status" value="1"/>
</dbReference>
<dbReference type="FunFam" id="3.30.200.20:FF:000217">
    <property type="entry name" value="probable LRR receptor-like serine/threonine-protein kinase At1g53430"/>
    <property type="match status" value="1"/>
</dbReference>
<dbReference type="FunFam" id="2.60.120.430:FF:000004">
    <property type="entry name" value="Putative leucine-rich repeat receptor-like serine/threonine-protein kinase"/>
    <property type="match status" value="1"/>
</dbReference>
<dbReference type="Gene3D" id="2.60.120.430">
    <property type="entry name" value="Galactose-binding lectin"/>
    <property type="match status" value="1"/>
</dbReference>
<dbReference type="Gene3D" id="3.30.200.20">
    <property type="entry name" value="Phosphorylase Kinase, domain 1"/>
    <property type="match status" value="1"/>
</dbReference>
<dbReference type="Gene3D" id="3.80.10.10">
    <property type="entry name" value="Ribonuclease Inhibitor"/>
    <property type="match status" value="3"/>
</dbReference>
<dbReference type="Gene3D" id="1.10.510.10">
    <property type="entry name" value="Transferase(Phosphotransferase) domain 1"/>
    <property type="match status" value="1"/>
</dbReference>
<dbReference type="InterPro" id="IPR011009">
    <property type="entry name" value="Kinase-like_dom_sf"/>
</dbReference>
<dbReference type="InterPro" id="IPR001611">
    <property type="entry name" value="Leu-rich_rpt"/>
</dbReference>
<dbReference type="InterPro" id="IPR032675">
    <property type="entry name" value="LRR_dom_sf"/>
</dbReference>
<dbReference type="InterPro" id="IPR051824">
    <property type="entry name" value="LRR_Rcpt-Like_S/T_Kinase"/>
</dbReference>
<dbReference type="InterPro" id="IPR021720">
    <property type="entry name" value="Malectin_dom"/>
</dbReference>
<dbReference type="InterPro" id="IPR000719">
    <property type="entry name" value="Prot_kinase_dom"/>
</dbReference>
<dbReference type="InterPro" id="IPR017441">
    <property type="entry name" value="Protein_kinase_ATP_BS"/>
</dbReference>
<dbReference type="InterPro" id="IPR001245">
    <property type="entry name" value="Ser-Thr/Tyr_kinase_cat_dom"/>
</dbReference>
<dbReference type="InterPro" id="IPR008271">
    <property type="entry name" value="Ser/Thr_kinase_AS"/>
</dbReference>
<dbReference type="PANTHER" id="PTHR48006">
    <property type="entry name" value="LEUCINE-RICH REPEAT-CONTAINING PROTEIN DDB_G0281931-RELATED"/>
    <property type="match status" value="1"/>
</dbReference>
<dbReference type="PANTHER" id="PTHR48006:SF66">
    <property type="entry name" value="PROTEIN KINASE DOMAIN-CONTAINING PROTEIN"/>
    <property type="match status" value="1"/>
</dbReference>
<dbReference type="Pfam" id="PF00560">
    <property type="entry name" value="LRR_1"/>
    <property type="match status" value="2"/>
</dbReference>
<dbReference type="Pfam" id="PF11721">
    <property type="entry name" value="Malectin"/>
    <property type="match status" value="1"/>
</dbReference>
<dbReference type="Pfam" id="PF07714">
    <property type="entry name" value="PK_Tyr_Ser-Thr"/>
    <property type="match status" value="1"/>
</dbReference>
<dbReference type="SMART" id="SM00220">
    <property type="entry name" value="S_TKc"/>
    <property type="match status" value="1"/>
</dbReference>
<dbReference type="SUPFAM" id="SSF52058">
    <property type="entry name" value="L domain-like"/>
    <property type="match status" value="1"/>
</dbReference>
<dbReference type="SUPFAM" id="SSF56112">
    <property type="entry name" value="Protein kinase-like (PK-like)"/>
    <property type="match status" value="1"/>
</dbReference>
<dbReference type="PROSITE" id="PS00107">
    <property type="entry name" value="PROTEIN_KINASE_ATP"/>
    <property type="match status" value="1"/>
</dbReference>
<dbReference type="PROSITE" id="PS50011">
    <property type="entry name" value="PROTEIN_KINASE_DOM"/>
    <property type="match status" value="1"/>
</dbReference>
<dbReference type="PROSITE" id="PS00108">
    <property type="entry name" value="PROTEIN_KINASE_ST"/>
    <property type="match status" value="1"/>
</dbReference>
<protein>
    <recommendedName>
        <fullName>Probable LRR receptor-like serine/threonine-protein kinase At1g29720</fullName>
        <ecNumber>2.7.11.1</ecNumber>
    </recommendedName>
</protein>